<gene>
    <name evidence="1" type="primary">lexA</name>
    <name type="ordered locus">BMA1211</name>
</gene>
<proteinExistence type="inferred from homology"/>
<comment type="function">
    <text evidence="1">Represses a number of genes involved in the response to DNA damage (SOS response), including recA and lexA. In the presence of single-stranded DNA, RecA interacts with LexA causing an autocatalytic cleavage which disrupts the DNA-binding part of LexA, leading to derepression of the SOS regulon and eventually DNA repair.</text>
</comment>
<comment type="catalytic activity">
    <reaction evidence="1">
        <text>Hydrolysis of Ala-|-Gly bond in repressor LexA.</text>
        <dbReference type="EC" id="3.4.21.88"/>
    </reaction>
</comment>
<comment type="subunit">
    <text evidence="1">Homodimer.</text>
</comment>
<comment type="similarity">
    <text evidence="1">Belongs to the peptidase S24 family.</text>
</comment>
<protein>
    <recommendedName>
        <fullName evidence="1">LexA repressor</fullName>
        <ecNumber evidence="1">3.4.21.88</ecNumber>
    </recommendedName>
</protein>
<accession>Q62K79</accession>
<name>LEXA_BURMA</name>
<reference key="1">
    <citation type="journal article" date="2004" name="Proc. Natl. Acad. Sci. U.S.A.">
        <title>Structural flexibility in the Burkholderia mallei genome.</title>
        <authorList>
            <person name="Nierman W.C."/>
            <person name="DeShazer D."/>
            <person name="Kim H.S."/>
            <person name="Tettelin H."/>
            <person name="Nelson K.E."/>
            <person name="Feldblyum T.V."/>
            <person name="Ulrich R.L."/>
            <person name="Ronning C.M."/>
            <person name="Brinkac L.M."/>
            <person name="Daugherty S.C."/>
            <person name="Davidsen T.D."/>
            <person name="DeBoy R.T."/>
            <person name="Dimitrov G."/>
            <person name="Dodson R.J."/>
            <person name="Durkin A.S."/>
            <person name="Gwinn M.L."/>
            <person name="Haft D.H."/>
            <person name="Khouri H.M."/>
            <person name="Kolonay J.F."/>
            <person name="Madupu R."/>
            <person name="Mohammoud Y."/>
            <person name="Nelson W.C."/>
            <person name="Radune D."/>
            <person name="Romero C.M."/>
            <person name="Sarria S."/>
            <person name="Selengut J."/>
            <person name="Shamblin C."/>
            <person name="Sullivan S.A."/>
            <person name="White O."/>
            <person name="Yu Y."/>
            <person name="Zafar N."/>
            <person name="Zhou L."/>
            <person name="Fraser C.M."/>
        </authorList>
    </citation>
    <scope>NUCLEOTIDE SEQUENCE [LARGE SCALE GENOMIC DNA]</scope>
    <source>
        <strain>ATCC 23344</strain>
    </source>
</reference>
<feature type="chain" id="PRO_0000170021" description="LexA repressor">
    <location>
        <begin position="1"/>
        <end position="215"/>
    </location>
</feature>
<feature type="DNA-binding region" description="H-T-H motif" evidence="1">
    <location>
        <begin position="28"/>
        <end position="48"/>
    </location>
</feature>
<feature type="active site" description="For autocatalytic cleavage activity" evidence="1">
    <location>
        <position position="133"/>
    </location>
</feature>
<feature type="active site" description="For autocatalytic cleavage activity" evidence="1">
    <location>
        <position position="170"/>
    </location>
</feature>
<feature type="site" description="Cleavage; by autolysis" evidence="1">
    <location>
        <begin position="98"/>
        <end position="99"/>
    </location>
</feature>
<organism>
    <name type="scientific">Burkholderia mallei (strain ATCC 23344)</name>
    <dbReference type="NCBI Taxonomy" id="243160"/>
    <lineage>
        <taxon>Bacteria</taxon>
        <taxon>Pseudomonadati</taxon>
        <taxon>Pseudomonadota</taxon>
        <taxon>Betaproteobacteria</taxon>
        <taxon>Burkholderiales</taxon>
        <taxon>Burkholderiaceae</taxon>
        <taxon>Burkholderia</taxon>
        <taxon>pseudomallei group</taxon>
    </lineage>
</organism>
<keyword id="KW-0068">Autocatalytic cleavage</keyword>
<keyword id="KW-0227">DNA damage</keyword>
<keyword id="KW-0234">DNA repair</keyword>
<keyword id="KW-0235">DNA replication</keyword>
<keyword id="KW-0238">DNA-binding</keyword>
<keyword id="KW-0378">Hydrolase</keyword>
<keyword id="KW-1185">Reference proteome</keyword>
<keyword id="KW-0678">Repressor</keyword>
<keyword id="KW-0742">SOS response</keyword>
<keyword id="KW-0804">Transcription</keyword>
<keyword id="KW-0805">Transcription regulation</keyword>
<dbReference type="EC" id="3.4.21.88" evidence="1"/>
<dbReference type="EMBL" id="CP000010">
    <property type="protein sequence ID" value="AAU47472.1"/>
    <property type="molecule type" value="Genomic_DNA"/>
</dbReference>
<dbReference type="RefSeq" id="WP_004191638.1">
    <property type="nucleotide sequence ID" value="NC_006348.1"/>
</dbReference>
<dbReference type="RefSeq" id="YP_102890.1">
    <property type="nucleotide sequence ID" value="NC_006348.1"/>
</dbReference>
<dbReference type="SMR" id="Q62K79"/>
<dbReference type="MEROPS" id="S24.001"/>
<dbReference type="GeneID" id="93060159"/>
<dbReference type="KEGG" id="bma:BMA1211"/>
<dbReference type="PATRIC" id="fig|243160.12.peg.1246"/>
<dbReference type="eggNOG" id="COG1974">
    <property type="taxonomic scope" value="Bacteria"/>
</dbReference>
<dbReference type="HOGENOM" id="CLU_066192_45_3_4"/>
<dbReference type="Proteomes" id="UP000006693">
    <property type="component" value="Chromosome 1"/>
</dbReference>
<dbReference type="GO" id="GO:0003677">
    <property type="term" value="F:DNA binding"/>
    <property type="evidence" value="ECO:0007669"/>
    <property type="project" value="UniProtKB-UniRule"/>
</dbReference>
<dbReference type="GO" id="GO:0004252">
    <property type="term" value="F:serine-type endopeptidase activity"/>
    <property type="evidence" value="ECO:0007669"/>
    <property type="project" value="UniProtKB-UniRule"/>
</dbReference>
<dbReference type="GO" id="GO:0006281">
    <property type="term" value="P:DNA repair"/>
    <property type="evidence" value="ECO:0007669"/>
    <property type="project" value="UniProtKB-UniRule"/>
</dbReference>
<dbReference type="GO" id="GO:0006260">
    <property type="term" value="P:DNA replication"/>
    <property type="evidence" value="ECO:0007669"/>
    <property type="project" value="UniProtKB-UniRule"/>
</dbReference>
<dbReference type="GO" id="GO:0045892">
    <property type="term" value="P:negative regulation of DNA-templated transcription"/>
    <property type="evidence" value="ECO:0007669"/>
    <property type="project" value="UniProtKB-UniRule"/>
</dbReference>
<dbReference type="GO" id="GO:0006508">
    <property type="term" value="P:proteolysis"/>
    <property type="evidence" value="ECO:0007669"/>
    <property type="project" value="InterPro"/>
</dbReference>
<dbReference type="GO" id="GO:0009432">
    <property type="term" value="P:SOS response"/>
    <property type="evidence" value="ECO:0007669"/>
    <property type="project" value="UniProtKB-UniRule"/>
</dbReference>
<dbReference type="CDD" id="cd06529">
    <property type="entry name" value="S24_LexA-like"/>
    <property type="match status" value="1"/>
</dbReference>
<dbReference type="FunFam" id="1.10.10.10:FF:000009">
    <property type="entry name" value="LexA repressor"/>
    <property type="match status" value="1"/>
</dbReference>
<dbReference type="FunFam" id="2.10.109.10:FF:000001">
    <property type="entry name" value="LexA repressor"/>
    <property type="match status" value="1"/>
</dbReference>
<dbReference type="Gene3D" id="2.10.109.10">
    <property type="entry name" value="Umud Fragment, subunit A"/>
    <property type="match status" value="1"/>
</dbReference>
<dbReference type="Gene3D" id="1.10.10.10">
    <property type="entry name" value="Winged helix-like DNA-binding domain superfamily/Winged helix DNA-binding domain"/>
    <property type="match status" value="1"/>
</dbReference>
<dbReference type="HAMAP" id="MF_00015">
    <property type="entry name" value="LexA"/>
    <property type="match status" value="1"/>
</dbReference>
<dbReference type="InterPro" id="IPR006200">
    <property type="entry name" value="LexA"/>
</dbReference>
<dbReference type="InterPro" id="IPR039418">
    <property type="entry name" value="LexA-like"/>
</dbReference>
<dbReference type="InterPro" id="IPR036286">
    <property type="entry name" value="LexA/Signal_pep-like_sf"/>
</dbReference>
<dbReference type="InterPro" id="IPR006199">
    <property type="entry name" value="LexA_DNA-bd_dom"/>
</dbReference>
<dbReference type="InterPro" id="IPR050077">
    <property type="entry name" value="LexA_repressor"/>
</dbReference>
<dbReference type="InterPro" id="IPR006197">
    <property type="entry name" value="Peptidase_S24_LexA"/>
</dbReference>
<dbReference type="InterPro" id="IPR015927">
    <property type="entry name" value="Peptidase_S24_S26A/B/C"/>
</dbReference>
<dbReference type="InterPro" id="IPR036388">
    <property type="entry name" value="WH-like_DNA-bd_sf"/>
</dbReference>
<dbReference type="InterPro" id="IPR036390">
    <property type="entry name" value="WH_DNA-bd_sf"/>
</dbReference>
<dbReference type="NCBIfam" id="TIGR00498">
    <property type="entry name" value="lexA"/>
    <property type="match status" value="1"/>
</dbReference>
<dbReference type="PANTHER" id="PTHR33516">
    <property type="entry name" value="LEXA REPRESSOR"/>
    <property type="match status" value="1"/>
</dbReference>
<dbReference type="PANTHER" id="PTHR33516:SF2">
    <property type="entry name" value="LEXA REPRESSOR-RELATED"/>
    <property type="match status" value="1"/>
</dbReference>
<dbReference type="Pfam" id="PF01726">
    <property type="entry name" value="LexA_DNA_bind"/>
    <property type="match status" value="1"/>
</dbReference>
<dbReference type="Pfam" id="PF00717">
    <property type="entry name" value="Peptidase_S24"/>
    <property type="match status" value="1"/>
</dbReference>
<dbReference type="PRINTS" id="PR00726">
    <property type="entry name" value="LEXASERPTASE"/>
</dbReference>
<dbReference type="SUPFAM" id="SSF51306">
    <property type="entry name" value="LexA/Signal peptidase"/>
    <property type="match status" value="1"/>
</dbReference>
<dbReference type="SUPFAM" id="SSF46785">
    <property type="entry name" value="Winged helix' DNA-binding domain"/>
    <property type="match status" value="1"/>
</dbReference>
<evidence type="ECO:0000255" key="1">
    <source>
        <dbReference type="HAMAP-Rule" id="MF_00015"/>
    </source>
</evidence>
<sequence length="215" mass="23199">MIKLTARQQQVFDLIRRAIERSGFPPTRAEIAAELGFSSPNAAEEHLRALARKGVIELAAGASRGIRLLGIDDAPHQLTLPHAALMQLSLPLVGRVAAGSPILAQEHISQHYACDPALFSSKPDYLLKVRGLSMRDAGILDGDLLAVQKRTEAKDGQIIVARLGDDVTVKRLKRRPGGVELIAENPDYENIFVKAGSAEFALEGIAVGLIRPGEF</sequence>